<accession>O04395</accession>
<reference key="1">
    <citation type="submission" date="1997-04" db="EMBL/GenBank/DDBJ databases">
        <title>Cloning and expression of a flavonol synthase gene from common stock (Matthiola incana).</title>
        <authorList>
            <person name="Henkel J."/>
            <person name="Forkmann G."/>
        </authorList>
    </citation>
    <scope>NUCLEOTIDE SEQUENCE [MRNA]</scope>
    <source>
        <tissue>Flower bud</tissue>
        <tissue>Petal</tissue>
    </source>
</reference>
<feature type="chain" id="PRO_0000067295" description="Flavonol synthase/flavanone 3-hydroxylase">
    <location>
        <begin position="1" status="less than"/>
        <end position="291"/>
    </location>
</feature>
<feature type="domain" description="Fe2OG dioxygenase" evidence="2">
    <location>
        <begin position="151"/>
        <end position="250"/>
    </location>
</feature>
<feature type="binding site" evidence="2">
    <location>
        <position position="175"/>
    </location>
    <ligand>
        <name>Fe cation</name>
        <dbReference type="ChEBI" id="CHEBI:24875"/>
    </ligand>
</feature>
<feature type="binding site" evidence="2">
    <location>
        <position position="177"/>
    </location>
    <ligand>
        <name>Fe cation</name>
        <dbReference type="ChEBI" id="CHEBI:24875"/>
    </ligand>
</feature>
<feature type="binding site" evidence="2">
    <location>
        <position position="231"/>
    </location>
    <ligand>
        <name>Fe cation</name>
        <dbReference type="ChEBI" id="CHEBI:24875"/>
    </ligand>
</feature>
<feature type="non-terminal residue">
    <location>
        <position position="1"/>
    </location>
</feature>
<keyword id="KW-0963">Cytoplasm</keyword>
<keyword id="KW-0223">Dioxygenase</keyword>
<keyword id="KW-0284">Flavonoid biosynthesis</keyword>
<keyword id="KW-0408">Iron</keyword>
<keyword id="KW-0479">Metal-binding</keyword>
<keyword id="KW-0560">Oxidoreductase</keyword>
<keyword id="KW-0847">Vitamin C</keyword>
<proteinExistence type="evidence at transcript level"/>
<evidence type="ECO:0000250" key="1">
    <source>
        <dbReference type="UniProtKB" id="Q7XZQ6"/>
    </source>
</evidence>
<evidence type="ECO:0000255" key="2">
    <source>
        <dbReference type="PROSITE-ProRule" id="PRU00805"/>
    </source>
</evidence>
<evidence type="ECO:0000305" key="3"/>
<organism>
    <name type="scientific">Matthiola incana</name>
    <name type="common">Common stock</name>
    <name type="synonym">Cheiranthus incanus</name>
    <dbReference type="NCBI Taxonomy" id="3724"/>
    <lineage>
        <taxon>Eukaryota</taxon>
        <taxon>Viridiplantae</taxon>
        <taxon>Streptophyta</taxon>
        <taxon>Embryophyta</taxon>
        <taxon>Tracheophyta</taxon>
        <taxon>Spermatophyta</taxon>
        <taxon>Magnoliopsida</taxon>
        <taxon>eudicotyledons</taxon>
        <taxon>Gunneridae</taxon>
        <taxon>Pentapetalae</taxon>
        <taxon>rosids</taxon>
        <taxon>malvids</taxon>
        <taxon>Brassicales</taxon>
        <taxon>Brassicaceae</taxon>
        <taxon>Anchonieae</taxon>
        <taxon>Matthiola</taxon>
    </lineage>
</organism>
<name>FLS_MATIN</name>
<comment type="function">
    <text>Catalyzes the formation of flavonols from dihydroflavonols. It can act on dihydrokaempferol to produce kaempferol, on dihydroquercetin to produce quercitin and on dihydromyricetin to produce myricetin.</text>
</comment>
<comment type="catalytic activity">
    <reaction evidence="1">
        <text>a (2R,3R)-dihydroflavonol + 2-oxoglutarate + O2 = a flavonol + succinate + CO2 + H2O</text>
        <dbReference type="Rhea" id="RHEA:21088"/>
        <dbReference type="ChEBI" id="CHEBI:15377"/>
        <dbReference type="ChEBI" id="CHEBI:15379"/>
        <dbReference type="ChEBI" id="CHEBI:16526"/>
        <dbReference type="ChEBI" id="CHEBI:16810"/>
        <dbReference type="ChEBI" id="CHEBI:28802"/>
        <dbReference type="ChEBI" id="CHEBI:30031"/>
        <dbReference type="ChEBI" id="CHEBI:138188"/>
        <dbReference type="EC" id="1.14.20.6"/>
    </reaction>
</comment>
<comment type="catalytic activity">
    <reaction evidence="1">
        <text>a (2S)-flavan-4-one + 2-oxoglutarate + O2 = a (2R,3R)-dihydroflavonol + succinate + CO2</text>
        <dbReference type="Rhea" id="RHEA:18621"/>
        <dbReference type="ChEBI" id="CHEBI:15379"/>
        <dbReference type="ChEBI" id="CHEBI:16526"/>
        <dbReference type="ChEBI" id="CHEBI:16810"/>
        <dbReference type="ChEBI" id="CHEBI:30031"/>
        <dbReference type="ChEBI" id="CHEBI:138188"/>
        <dbReference type="ChEBI" id="CHEBI:140377"/>
        <dbReference type="EC" id="1.14.11.9"/>
    </reaction>
</comment>
<comment type="cofactor">
    <cofactor>
        <name>L-ascorbate</name>
        <dbReference type="ChEBI" id="CHEBI:38290"/>
    </cofactor>
    <text>Binds 1 ascorbate molecule per subunit.</text>
</comment>
<comment type="cofactor">
    <cofactor>
        <name>Fe cation</name>
        <dbReference type="ChEBI" id="CHEBI:24875"/>
    </cofactor>
    <text>Binds 1 Fe cation per subunit.</text>
</comment>
<comment type="pathway">
    <text>Secondary metabolite biosynthesis; flavonoid biosynthesis.</text>
</comment>
<comment type="subcellular location">
    <subcellularLocation>
        <location>Cytoplasm</location>
    </subcellularLocation>
</comment>
<comment type="similarity">
    <text evidence="3">Belongs to the iron/ascorbate-dependent oxidoreductase family.</text>
</comment>
<sequence>QVPVVDLSCPDEELVARTVVKASEDWGVFQVVNHGIPTELIQRLQKVGREFFELPEAEKRSCAREAGSVEGYGRRIELDIKKRKGIVDQIYLSTWPPSSVNYRYWPKSPPDYREVNEEYARHVKTLSEKIMEWLSEGLGLGREAIKEVNGCWYVMNINHYPPYPHSDSFNGLEPHTDINGLTLIITNEIPGLQVFKDDHWIEVEYIPSAIIVNIGDQIMMLSNGKYKNVLHKTTVDKEKTRMSWPVLVSPTYDMVVGPLPELTSEDDPPKFKPIAYKDYVHNKITFLKNKS</sequence>
<dbReference type="EC" id="1.14.11.9" evidence="1"/>
<dbReference type="EC" id="1.14.20.6" evidence="1"/>
<dbReference type="EMBL" id="AF001391">
    <property type="protein sequence ID" value="AAB58800.1"/>
    <property type="molecule type" value="mRNA"/>
</dbReference>
<dbReference type="SMR" id="O04395"/>
<dbReference type="UniPathway" id="UPA00154"/>
<dbReference type="GO" id="GO:0005737">
    <property type="term" value="C:cytoplasm"/>
    <property type="evidence" value="ECO:0007669"/>
    <property type="project" value="UniProtKB-SubCell"/>
</dbReference>
<dbReference type="GO" id="GO:0045486">
    <property type="term" value="F:flavanone 3-dioxygenase activity"/>
    <property type="evidence" value="ECO:0007669"/>
    <property type="project" value="UniProtKB-EC"/>
</dbReference>
<dbReference type="GO" id="GO:0045431">
    <property type="term" value="F:flavonol synthase activity"/>
    <property type="evidence" value="ECO:0007669"/>
    <property type="project" value="UniProtKB-EC"/>
</dbReference>
<dbReference type="GO" id="GO:0031418">
    <property type="term" value="F:L-ascorbic acid binding"/>
    <property type="evidence" value="ECO:0007669"/>
    <property type="project" value="UniProtKB-KW"/>
</dbReference>
<dbReference type="GO" id="GO:0046872">
    <property type="term" value="F:metal ion binding"/>
    <property type="evidence" value="ECO:0007669"/>
    <property type="project" value="UniProtKB-KW"/>
</dbReference>
<dbReference type="Gene3D" id="2.60.120.330">
    <property type="entry name" value="B-lactam Antibiotic, Isopenicillin N Synthase, Chain"/>
    <property type="match status" value="1"/>
</dbReference>
<dbReference type="InterPro" id="IPR026992">
    <property type="entry name" value="DIOX_N"/>
</dbReference>
<dbReference type="InterPro" id="IPR044861">
    <property type="entry name" value="IPNS-like_FE2OG_OXY"/>
</dbReference>
<dbReference type="InterPro" id="IPR027443">
    <property type="entry name" value="IPNS-like_sf"/>
</dbReference>
<dbReference type="InterPro" id="IPR050231">
    <property type="entry name" value="Iron_ascorbate_oxido_reductase"/>
</dbReference>
<dbReference type="InterPro" id="IPR005123">
    <property type="entry name" value="Oxoglu/Fe-dep_dioxygenase_dom"/>
</dbReference>
<dbReference type="PANTHER" id="PTHR47990">
    <property type="entry name" value="2-OXOGLUTARATE (2OG) AND FE(II)-DEPENDENT OXYGENASE SUPERFAMILY PROTEIN-RELATED"/>
    <property type="match status" value="1"/>
</dbReference>
<dbReference type="Pfam" id="PF03171">
    <property type="entry name" value="2OG-FeII_Oxy"/>
    <property type="match status" value="1"/>
</dbReference>
<dbReference type="Pfam" id="PF14226">
    <property type="entry name" value="DIOX_N"/>
    <property type="match status" value="1"/>
</dbReference>
<dbReference type="SUPFAM" id="SSF51197">
    <property type="entry name" value="Clavaminate synthase-like"/>
    <property type="match status" value="1"/>
</dbReference>
<dbReference type="PROSITE" id="PS51471">
    <property type="entry name" value="FE2OG_OXY"/>
    <property type="match status" value="1"/>
</dbReference>
<protein>
    <recommendedName>
        <fullName>Flavonol synthase/flavanone 3-hydroxylase</fullName>
        <shortName>FLS</shortName>
        <ecNumber evidence="1">1.14.11.9</ecNumber>
        <ecNumber evidence="1">1.14.20.6</ecNumber>
    </recommendedName>
</protein>